<gene>
    <name evidence="1" type="primary">tmk</name>
    <name type="ordered locus">MYPU_0520</name>
</gene>
<organism>
    <name type="scientific">Mycoplasmopsis pulmonis (strain UAB CTIP)</name>
    <name type="common">Mycoplasma pulmonis</name>
    <dbReference type="NCBI Taxonomy" id="272635"/>
    <lineage>
        <taxon>Bacteria</taxon>
        <taxon>Bacillati</taxon>
        <taxon>Mycoplasmatota</taxon>
        <taxon>Mycoplasmoidales</taxon>
        <taxon>Metamycoplasmataceae</taxon>
        <taxon>Mycoplasmopsis</taxon>
    </lineage>
</organism>
<accession>Q98RF7</accession>
<name>KTHY_MYCPU</name>
<sequence>MKIENKSDKEEDQMFITFEGIDASGKTSLLAKLKAHVVQKNLQGKCTFTWEPGGRKSPEIQTIRHLILNKESNLSPIAEAFLYSSARRIHLDKVILPNLAKNKVVFCDRFVDSSFAYQAFGRDLGFEKIKLLNELATDKKYPDITFILKISYEESMERRKARQEDEDRLEKEENSFYQKVIKGYDFLASYPEFQKRIFVIDASKNQEEIFESVLKILKDHKTFQTHPIYKDFFS</sequence>
<proteinExistence type="inferred from homology"/>
<dbReference type="EC" id="2.7.4.9" evidence="1"/>
<dbReference type="EMBL" id="AL445563">
    <property type="protein sequence ID" value="CAC13225.1"/>
    <property type="molecule type" value="Genomic_DNA"/>
</dbReference>
<dbReference type="PIR" id="D90518">
    <property type="entry name" value="D90518"/>
</dbReference>
<dbReference type="SMR" id="Q98RF7"/>
<dbReference type="STRING" id="272635.gene:17576631"/>
<dbReference type="KEGG" id="mpu:MYPU_0520"/>
<dbReference type="eggNOG" id="COG0125">
    <property type="taxonomic scope" value="Bacteria"/>
</dbReference>
<dbReference type="HOGENOM" id="CLU_049131_0_2_14"/>
<dbReference type="BioCyc" id="MPUL272635:G1GT6-52-MONOMER"/>
<dbReference type="Proteomes" id="UP000000528">
    <property type="component" value="Chromosome"/>
</dbReference>
<dbReference type="GO" id="GO:0005829">
    <property type="term" value="C:cytosol"/>
    <property type="evidence" value="ECO:0007669"/>
    <property type="project" value="TreeGrafter"/>
</dbReference>
<dbReference type="GO" id="GO:0005524">
    <property type="term" value="F:ATP binding"/>
    <property type="evidence" value="ECO:0007669"/>
    <property type="project" value="UniProtKB-UniRule"/>
</dbReference>
<dbReference type="GO" id="GO:0004798">
    <property type="term" value="F:dTMP kinase activity"/>
    <property type="evidence" value="ECO:0007669"/>
    <property type="project" value="UniProtKB-UniRule"/>
</dbReference>
<dbReference type="GO" id="GO:0006233">
    <property type="term" value="P:dTDP biosynthetic process"/>
    <property type="evidence" value="ECO:0007669"/>
    <property type="project" value="InterPro"/>
</dbReference>
<dbReference type="GO" id="GO:0006235">
    <property type="term" value="P:dTTP biosynthetic process"/>
    <property type="evidence" value="ECO:0007669"/>
    <property type="project" value="UniProtKB-UniRule"/>
</dbReference>
<dbReference type="GO" id="GO:0006227">
    <property type="term" value="P:dUDP biosynthetic process"/>
    <property type="evidence" value="ECO:0007669"/>
    <property type="project" value="TreeGrafter"/>
</dbReference>
<dbReference type="CDD" id="cd01672">
    <property type="entry name" value="TMPK"/>
    <property type="match status" value="1"/>
</dbReference>
<dbReference type="FunFam" id="3.40.50.300:FF:000225">
    <property type="entry name" value="Thymidylate kinase"/>
    <property type="match status" value="1"/>
</dbReference>
<dbReference type="Gene3D" id="3.40.50.300">
    <property type="entry name" value="P-loop containing nucleotide triphosphate hydrolases"/>
    <property type="match status" value="1"/>
</dbReference>
<dbReference type="HAMAP" id="MF_00165">
    <property type="entry name" value="Thymidylate_kinase"/>
    <property type="match status" value="1"/>
</dbReference>
<dbReference type="InterPro" id="IPR027417">
    <property type="entry name" value="P-loop_NTPase"/>
</dbReference>
<dbReference type="InterPro" id="IPR039430">
    <property type="entry name" value="Thymidylate_kin-like_dom"/>
</dbReference>
<dbReference type="InterPro" id="IPR018094">
    <property type="entry name" value="Thymidylate_kinase"/>
</dbReference>
<dbReference type="NCBIfam" id="TIGR00041">
    <property type="entry name" value="DTMP_kinase"/>
    <property type="match status" value="1"/>
</dbReference>
<dbReference type="PANTHER" id="PTHR10344">
    <property type="entry name" value="THYMIDYLATE KINASE"/>
    <property type="match status" value="1"/>
</dbReference>
<dbReference type="PANTHER" id="PTHR10344:SF4">
    <property type="entry name" value="UMP-CMP KINASE 2, MITOCHONDRIAL"/>
    <property type="match status" value="1"/>
</dbReference>
<dbReference type="Pfam" id="PF02223">
    <property type="entry name" value="Thymidylate_kin"/>
    <property type="match status" value="1"/>
</dbReference>
<dbReference type="SUPFAM" id="SSF52540">
    <property type="entry name" value="P-loop containing nucleoside triphosphate hydrolases"/>
    <property type="match status" value="1"/>
</dbReference>
<reference key="1">
    <citation type="journal article" date="2001" name="Nucleic Acids Res.">
        <title>The complete genome sequence of the murine respiratory pathogen Mycoplasma pulmonis.</title>
        <authorList>
            <person name="Chambaud I."/>
            <person name="Heilig R."/>
            <person name="Ferris S."/>
            <person name="Barbe V."/>
            <person name="Samson D."/>
            <person name="Galisson F."/>
            <person name="Moszer I."/>
            <person name="Dybvig K."/>
            <person name="Wroblewski H."/>
            <person name="Viari A."/>
            <person name="Rocha E.P.C."/>
            <person name="Blanchard A."/>
        </authorList>
    </citation>
    <scope>NUCLEOTIDE SEQUENCE [LARGE SCALE GENOMIC DNA]</scope>
    <source>
        <strain>UAB CTIP</strain>
    </source>
</reference>
<comment type="function">
    <text evidence="1">Phosphorylation of dTMP to form dTDP in both de novo and salvage pathways of dTTP synthesis.</text>
</comment>
<comment type="catalytic activity">
    <reaction evidence="1">
        <text>dTMP + ATP = dTDP + ADP</text>
        <dbReference type="Rhea" id="RHEA:13517"/>
        <dbReference type="ChEBI" id="CHEBI:30616"/>
        <dbReference type="ChEBI" id="CHEBI:58369"/>
        <dbReference type="ChEBI" id="CHEBI:63528"/>
        <dbReference type="ChEBI" id="CHEBI:456216"/>
        <dbReference type="EC" id="2.7.4.9"/>
    </reaction>
</comment>
<comment type="similarity">
    <text evidence="1">Belongs to the thymidylate kinase family.</text>
</comment>
<protein>
    <recommendedName>
        <fullName evidence="1">Thymidylate kinase</fullName>
        <ecNumber evidence="1">2.7.4.9</ecNumber>
    </recommendedName>
    <alternativeName>
        <fullName evidence="1">dTMP kinase</fullName>
    </alternativeName>
</protein>
<evidence type="ECO:0000255" key="1">
    <source>
        <dbReference type="HAMAP-Rule" id="MF_00165"/>
    </source>
</evidence>
<feature type="chain" id="PRO_0000155308" description="Thymidylate kinase">
    <location>
        <begin position="1"/>
        <end position="234"/>
    </location>
</feature>
<feature type="binding site" evidence="1">
    <location>
        <begin position="20"/>
        <end position="27"/>
    </location>
    <ligand>
        <name>ATP</name>
        <dbReference type="ChEBI" id="CHEBI:30616"/>
    </ligand>
</feature>
<keyword id="KW-0067">ATP-binding</keyword>
<keyword id="KW-0418">Kinase</keyword>
<keyword id="KW-0545">Nucleotide biosynthesis</keyword>
<keyword id="KW-0547">Nucleotide-binding</keyword>
<keyword id="KW-1185">Reference proteome</keyword>
<keyword id="KW-0808">Transferase</keyword>